<reference key="1">
    <citation type="journal article" date="2008" name="Genome Res.">
        <title>Chlamydia trachomatis: genome sequence analysis of lymphogranuloma venereum isolates.</title>
        <authorList>
            <person name="Thomson N.R."/>
            <person name="Holden M.T.G."/>
            <person name="Carder C."/>
            <person name="Lennard N."/>
            <person name="Lockey S.J."/>
            <person name="Marsh P."/>
            <person name="Skipp P."/>
            <person name="O'Connor C.D."/>
            <person name="Goodhead I."/>
            <person name="Norbertzcak H."/>
            <person name="Harris B."/>
            <person name="Ormond D."/>
            <person name="Rance R."/>
            <person name="Quail M.A."/>
            <person name="Parkhill J."/>
            <person name="Stephens R.S."/>
            <person name="Clarke I.N."/>
        </authorList>
    </citation>
    <scope>NUCLEOTIDE SEQUENCE [LARGE SCALE GENOMIC DNA]</scope>
    <source>
        <strain>UCH-1/proctitis</strain>
    </source>
</reference>
<protein>
    <recommendedName>
        <fullName evidence="1">V-type ATP synthase alpha chain</fullName>
        <ecNumber evidence="1">7.1.2.2</ecNumber>
    </recommendedName>
    <alternativeName>
        <fullName evidence="1">V-ATPase subunit A</fullName>
    </alternativeName>
</protein>
<organism>
    <name type="scientific">Chlamydia trachomatis serovar L2b (strain UCH-1/proctitis)</name>
    <dbReference type="NCBI Taxonomy" id="471473"/>
    <lineage>
        <taxon>Bacteria</taxon>
        <taxon>Pseudomonadati</taxon>
        <taxon>Chlamydiota</taxon>
        <taxon>Chlamydiia</taxon>
        <taxon>Chlamydiales</taxon>
        <taxon>Chlamydiaceae</taxon>
        <taxon>Chlamydia/Chlamydophila group</taxon>
        <taxon>Chlamydia</taxon>
    </lineage>
</organism>
<evidence type="ECO:0000255" key="1">
    <source>
        <dbReference type="HAMAP-Rule" id="MF_00309"/>
    </source>
</evidence>
<sequence>MVATSKQTTQGYVVEAYGNLLRVHVDGHVRQGEVAYVSVDNTWLKAEIIEVVGDEVKIQVFEETQGISRGALVTFSGHLLEAELGPGLLQGIFDGLQNRLEILADTSLFLRRGEYVNAICRETVWAYTQKASVGSVLSRGDVLGTVKEGRFDHKIMVPFSCFEEVTITWVISSGNYTVDTVVAKGRTSTGEELEFTMVQKWPIKQAFLEGEKVPSHEIMDVGLRVLDTQIPVLKGGTFCTPGPFGAGKTVLQHHLSKYAAVDIVVLCACGERAGEVVEILQEFPHLKDPHTGQSLMHRTCIICNTSSMPVAARESSIYLGITIAEYYRQMGLHILLLADSTSRWAQALREISGRLEEIPGEEAFPAYLASRIAAFYERGGAVKMKDGSEGSLTICGAVSPAGGNFEEPVTQATLSVVGAFCGLSKARADARRYPSIDPMISWSKYLDSVAEILEKKVPGWGESVKQASRFLEEGAEIGKRIEVVGEEGISMEDMEIFLKSELYDFCYLQQNAFDAEDCYCPFDRQIELFSLMNHIFNSRFCFDCPDNARSFFLELQSKIKTLNGQKFLSEEYQKGLEVIYKLLESKMVQTA</sequence>
<keyword id="KW-0066">ATP synthesis</keyword>
<keyword id="KW-0067">ATP-binding</keyword>
<keyword id="KW-0375">Hydrogen ion transport</keyword>
<keyword id="KW-0406">Ion transport</keyword>
<keyword id="KW-0547">Nucleotide-binding</keyword>
<keyword id="KW-1278">Translocase</keyword>
<keyword id="KW-0813">Transport</keyword>
<comment type="function">
    <text evidence="1">Produces ATP from ADP in the presence of a proton gradient across the membrane. The V-type alpha chain is a catalytic subunit.</text>
</comment>
<comment type="catalytic activity">
    <reaction evidence="1">
        <text>ATP + H2O + 4 H(+)(in) = ADP + phosphate + 5 H(+)(out)</text>
        <dbReference type="Rhea" id="RHEA:57720"/>
        <dbReference type="ChEBI" id="CHEBI:15377"/>
        <dbReference type="ChEBI" id="CHEBI:15378"/>
        <dbReference type="ChEBI" id="CHEBI:30616"/>
        <dbReference type="ChEBI" id="CHEBI:43474"/>
        <dbReference type="ChEBI" id="CHEBI:456216"/>
        <dbReference type="EC" id="7.1.2.2"/>
    </reaction>
</comment>
<comment type="similarity">
    <text evidence="1">Belongs to the ATPase alpha/beta chains family.</text>
</comment>
<accession>B0BBT9</accession>
<proteinExistence type="inferred from homology"/>
<feature type="chain" id="PRO_1000115635" description="V-type ATP synthase alpha chain">
    <location>
        <begin position="1"/>
        <end position="591"/>
    </location>
</feature>
<feature type="binding site" evidence="1">
    <location>
        <begin position="242"/>
        <end position="249"/>
    </location>
    <ligand>
        <name>ATP</name>
        <dbReference type="ChEBI" id="CHEBI:30616"/>
    </ligand>
</feature>
<name>VATA_CHLTB</name>
<dbReference type="EC" id="7.1.2.2" evidence="1"/>
<dbReference type="EMBL" id="AM884177">
    <property type="protein sequence ID" value="CAP06954.1"/>
    <property type="molecule type" value="Genomic_DNA"/>
</dbReference>
<dbReference type="RefSeq" id="WP_009873713.1">
    <property type="nucleotide sequence ID" value="NC_010280.2"/>
</dbReference>
<dbReference type="SMR" id="B0BBT9"/>
<dbReference type="KEGG" id="ctl:CTLon_0556"/>
<dbReference type="HOGENOM" id="CLU_008162_1_1_0"/>
<dbReference type="Proteomes" id="UP001154401">
    <property type="component" value="Chromosome"/>
</dbReference>
<dbReference type="GO" id="GO:0005524">
    <property type="term" value="F:ATP binding"/>
    <property type="evidence" value="ECO:0007669"/>
    <property type="project" value="UniProtKB-UniRule"/>
</dbReference>
<dbReference type="GO" id="GO:0046933">
    <property type="term" value="F:proton-transporting ATP synthase activity, rotational mechanism"/>
    <property type="evidence" value="ECO:0007669"/>
    <property type="project" value="UniProtKB-UniRule"/>
</dbReference>
<dbReference type="GO" id="GO:0046961">
    <property type="term" value="F:proton-transporting ATPase activity, rotational mechanism"/>
    <property type="evidence" value="ECO:0007669"/>
    <property type="project" value="InterPro"/>
</dbReference>
<dbReference type="GO" id="GO:0042777">
    <property type="term" value="P:proton motive force-driven plasma membrane ATP synthesis"/>
    <property type="evidence" value="ECO:0007669"/>
    <property type="project" value="UniProtKB-UniRule"/>
</dbReference>
<dbReference type="CDD" id="cd01426">
    <property type="entry name" value="ATP-synt_F1_V1_A1_AB_FliI_N"/>
    <property type="match status" value="1"/>
</dbReference>
<dbReference type="CDD" id="cd18111">
    <property type="entry name" value="ATP-synt_V_A-type_alpha_C"/>
    <property type="match status" value="1"/>
</dbReference>
<dbReference type="CDD" id="cd01134">
    <property type="entry name" value="V_A-ATPase_A"/>
    <property type="match status" value="1"/>
</dbReference>
<dbReference type="FunFam" id="1.10.1140.10:FF:000007">
    <property type="entry name" value="V-type ATP synthase alpha chain"/>
    <property type="match status" value="1"/>
</dbReference>
<dbReference type="FunFam" id="3.40.50.300:FF:000675">
    <property type="entry name" value="V-type ATP synthase alpha chain"/>
    <property type="match status" value="1"/>
</dbReference>
<dbReference type="Gene3D" id="2.30.30.650">
    <property type="match status" value="1"/>
</dbReference>
<dbReference type="Gene3D" id="2.40.50.100">
    <property type="match status" value="1"/>
</dbReference>
<dbReference type="Gene3D" id="1.10.1140.10">
    <property type="entry name" value="Bovine Mitochondrial F1-atpase, Atp Synthase Beta Chain, Chain D, domain 3"/>
    <property type="match status" value="1"/>
</dbReference>
<dbReference type="Gene3D" id="3.40.50.300">
    <property type="entry name" value="P-loop containing nucleotide triphosphate hydrolases"/>
    <property type="match status" value="1"/>
</dbReference>
<dbReference type="HAMAP" id="MF_00309">
    <property type="entry name" value="ATP_synth_A_arch"/>
    <property type="match status" value="1"/>
</dbReference>
<dbReference type="InterPro" id="IPR055190">
    <property type="entry name" value="ATP-synt_VA_C"/>
</dbReference>
<dbReference type="InterPro" id="IPR031686">
    <property type="entry name" value="ATP-synth_a_Xtn"/>
</dbReference>
<dbReference type="InterPro" id="IPR020003">
    <property type="entry name" value="ATPase_a/bsu_AS"/>
</dbReference>
<dbReference type="InterPro" id="IPR004100">
    <property type="entry name" value="ATPase_F1/V1/A1_a/bsu_N"/>
</dbReference>
<dbReference type="InterPro" id="IPR000194">
    <property type="entry name" value="ATPase_F1/V1/A1_a/bsu_nucl-bd"/>
</dbReference>
<dbReference type="InterPro" id="IPR024034">
    <property type="entry name" value="ATPase_F1/V1_b/a_C"/>
</dbReference>
<dbReference type="InterPro" id="IPR027417">
    <property type="entry name" value="P-loop_NTPase"/>
</dbReference>
<dbReference type="InterPro" id="IPR022878">
    <property type="entry name" value="V-ATPase_asu"/>
</dbReference>
<dbReference type="NCBIfam" id="NF003220">
    <property type="entry name" value="PRK04192.1"/>
    <property type="match status" value="1"/>
</dbReference>
<dbReference type="PANTHER" id="PTHR43607:SF1">
    <property type="entry name" value="H(+)-TRANSPORTING TWO-SECTOR ATPASE"/>
    <property type="match status" value="1"/>
</dbReference>
<dbReference type="PANTHER" id="PTHR43607">
    <property type="entry name" value="V-TYPE PROTON ATPASE CATALYTIC SUBUNIT A"/>
    <property type="match status" value="1"/>
</dbReference>
<dbReference type="Pfam" id="PF00006">
    <property type="entry name" value="ATP-synt_ab"/>
    <property type="match status" value="1"/>
</dbReference>
<dbReference type="Pfam" id="PF02874">
    <property type="entry name" value="ATP-synt_ab_N"/>
    <property type="match status" value="1"/>
</dbReference>
<dbReference type="Pfam" id="PF16886">
    <property type="entry name" value="ATP-synt_ab_Xtn"/>
    <property type="match status" value="1"/>
</dbReference>
<dbReference type="Pfam" id="PF22919">
    <property type="entry name" value="ATP-synt_VA_C"/>
    <property type="match status" value="1"/>
</dbReference>
<dbReference type="SUPFAM" id="SSF52540">
    <property type="entry name" value="P-loop containing nucleoside triphosphate hydrolases"/>
    <property type="match status" value="1"/>
</dbReference>
<dbReference type="PROSITE" id="PS00152">
    <property type="entry name" value="ATPASE_ALPHA_BETA"/>
    <property type="match status" value="1"/>
</dbReference>
<gene>
    <name evidence="1" type="primary">atpA</name>
    <name type="ordered locus">CTLon_0556</name>
</gene>